<accession>P23379</accession>
<gene>
    <name type="primary">ung</name>
    <name type="ordered locus">SP_1169</name>
</gene>
<reference key="1">
    <citation type="journal article" date="1990" name="Nucleic Acids Res.">
        <title>Nucleotide sequence of the Streptococcus pneumoniae ung gene encoding uracil-DNA glycosylase.</title>
        <authorList>
            <person name="Mejean V."/>
            <person name="Rives I."/>
            <person name="Claverys J.-P."/>
        </authorList>
    </citation>
    <scope>NUCLEOTIDE SEQUENCE [GENOMIC DNA]</scope>
    <source>
        <strain>R6 / R800</strain>
    </source>
</reference>
<reference key="2">
    <citation type="journal article" date="2001" name="Science">
        <title>Complete genome sequence of a virulent isolate of Streptococcus pneumoniae.</title>
        <authorList>
            <person name="Tettelin H."/>
            <person name="Nelson K.E."/>
            <person name="Paulsen I.T."/>
            <person name="Eisen J.A."/>
            <person name="Read T.D."/>
            <person name="Peterson S.N."/>
            <person name="Heidelberg J.F."/>
            <person name="DeBoy R.T."/>
            <person name="Haft D.H."/>
            <person name="Dodson R.J."/>
            <person name="Durkin A.S."/>
            <person name="Gwinn M.L."/>
            <person name="Kolonay J.F."/>
            <person name="Nelson W.C."/>
            <person name="Peterson J.D."/>
            <person name="Umayam L.A."/>
            <person name="White O."/>
            <person name="Salzberg S.L."/>
            <person name="Lewis M.R."/>
            <person name="Radune D."/>
            <person name="Holtzapple E.K."/>
            <person name="Khouri H.M."/>
            <person name="Wolf A.M."/>
            <person name="Utterback T.R."/>
            <person name="Hansen C.L."/>
            <person name="McDonald L.A."/>
            <person name="Feldblyum T.V."/>
            <person name="Angiuoli S.V."/>
            <person name="Dickinson T."/>
            <person name="Hickey E.K."/>
            <person name="Holt I.E."/>
            <person name="Loftus B.J."/>
            <person name="Yang F."/>
            <person name="Smith H.O."/>
            <person name="Venter J.C."/>
            <person name="Dougherty B.A."/>
            <person name="Morrison D.A."/>
            <person name="Hollingshead S.K."/>
            <person name="Fraser C.M."/>
        </authorList>
    </citation>
    <scope>NUCLEOTIDE SEQUENCE [LARGE SCALE GENOMIC DNA]</scope>
    <source>
        <strain>ATCC BAA-334 / TIGR4</strain>
    </source>
</reference>
<comment type="function">
    <text>Excises uracil residues from the DNA which can arise as a result of misincorporation of dUMP residues by DNA polymerase or due to deamination of cytosine.</text>
</comment>
<comment type="catalytic activity">
    <reaction>
        <text>Hydrolyzes single-stranded DNA or mismatched double-stranded DNA and polynucleotides, releasing free uracil.</text>
        <dbReference type="EC" id="3.2.2.27"/>
    </reaction>
</comment>
<comment type="subcellular location">
    <subcellularLocation>
        <location evidence="1">Cytoplasm</location>
    </subcellularLocation>
</comment>
<comment type="similarity">
    <text evidence="2">Belongs to the uracil-DNA glycosylase (UDG) superfamily. UNG family.</text>
</comment>
<feature type="chain" id="PRO_0000176152" description="Uracil-DNA glycosylase">
    <location>
        <begin position="1"/>
        <end position="217"/>
    </location>
</feature>
<feature type="active site" description="Proton acceptor" evidence="1">
    <location>
        <position position="62"/>
    </location>
</feature>
<feature type="sequence conflict" description="In Ref. 1; CAA39182/CAA79806." evidence="2" ref="1">
    <original>A</original>
    <variation>T</variation>
    <location>
        <position position="203"/>
    </location>
</feature>
<evidence type="ECO:0000250" key="1"/>
<evidence type="ECO:0000305" key="2"/>
<dbReference type="EC" id="3.2.2.27"/>
<dbReference type="EMBL" id="X55651">
    <property type="protein sequence ID" value="CAA39182.1"/>
    <property type="molecule type" value="Genomic_DNA"/>
</dbReference>
<dbReference type="EMBL" id="Z21702">
    <property type="protein sequence ID" value="CAA79806.1"/>
    <property type="molecule type" value="Genomic_DNA"/>
</dbReference>
<dbReference type="EMBL" id="AE005672">
    <property type="protein sequence ID" value="AAK75278.1"/>
    <property type="molecule type" value="Genomic_DNA"/>
</dbReference>
<dbReference type="PIR" id="E95135">
    <property type="entry name" value="E95135"/>
</dbReference>
<dbReference type="PIR" id="S13591">
    <property type="entry name" value="S13591"/>
</dbReference>
<dbReference type="RefSeq" id="WP_000401326.1">
    <property type="nucleotide sequence ID" value="NZ_CP155539.1"/>
</dbReference>
<dbReference type="SMR" id="P23379"/>
<dbReference type="PaxDb" id="170187-SP_1169"/>
<dbReference type="EnsemblBacteria" id="AAK75278">
    <property type="protein sequence ID" value="AAK75278"/>
    <property type="gene ID" value="SP_1169"/>
</dbReference>
<dbReference type="KEGG" id="spn:SP_1169"/>
<dbReference type="eggNOG" id="COG0692">
    <property type="taxonomic scope" value="Bacteria"/>
</dbReference>
<dbReference type="PhylomeDB" id="P23379"/>
<dbReference type="BioCyc" id="SPNE170187:G1FZB-1189-MONOMER"/>
<dbReference type="Proteomes" id="UP000000585">
    <property type="component" value="Chromosome"/>
</dbReference>
<dbReference type="GO" id="GO:0005737">
    <property type="term" value="C:cytoplasm"/>
    <property type="evidence" value="ECO:0007669"/>
    <property type="project" value="UniProtKB-SubCell"/>
</dbReference>
<dbReference type="GO" id="GO:0004844">
    <property type="term" value="F:uracil DNA N-glycosylase activity"/>
    <property type="evidence" value="ECO:0007669"/>
    <property type="project" value="UniProtKB-UniRule"/>
</dbReference>
<dbReference type="GO" id="GO:0097510">
    <property type="term" value="P:base-excision repair, AP site formation via deaminated base removal"/>
    <property type="evidence" value="ECO:0007669"/>
    <property type="project" value="TreeGrafter"/>
</dbReference>
<dbReference type="CDD" id="cd10027">
    <property type="entry name" value="UDG-F1-like"/>
    <property type="match status" value="1"/>
</dbReference>
<dbReference type="FunFam" id="3.40.470.10:FF:000008">
    <property type="entry name" value="Uracil-DNA glycosylase"/>
    <property type="match status" value="1"/>
</dbReference>
<dbReference type="Gene3D" id="3.40.470.10">
    <property type="entry name" value="Uracil-DNA glycosylase-like domain"/>
    <property type="match status" value="1"/>
</dbReference>
<dbReference type="HAMAP" id="MF_00148">
    <property type="entry name" value="UDG"/>
    <property type="match status" value="1"/>
</dbReference>
<dbReference type="InterPro" id="IPR002043">
    <property type="entry name" value="UDG_fam1"/>
</dbReference>
<dbReference type="InterPro" id="IPR018085">
    <property type="entry name" value="Ura-DNA_Glyclase_AS"/>
</dbReference>
<dbReference type="InterPro" id="IPR005122">
    <property type="entry name" value="Uracil-DNA_glycosylase-like"/>
</dbReference>
<dbReference type="InterPro" id="IPR036895">
    <property type="entry name" value="Uracil-DNA_glycosylase-like_sf"/>
</dbReference>
<dbReference type="NCBIfam" id="NF003588">
    <property type="entry name" value="PRK05254.1-1"/>
    <property type="match status" value="1"/>
</dbReference>
<dbReference type="NCBIfam" id="NF003589">
    <property type="entry name" value="PRK05254.1-2"/>
    <property type="match status" value="1"/>
</dbReference>
<dbReference type="NCBIfam" id="NF003591">
    <property type="entry name" value="PRK05254.1-4"/>
    <property type="match status" value="1"/>
</dbReference>
<dbReference type="NCBIfam" id="NF003592">
    <property type="entry name" value="PRK05254.1-5"/>
    <property type="match status" value="1"/>
</dbReference>
<dbReference type="NCBIfam" id="TIGR00628">
    <property type="entry name" value="ung"/>
    <property type="match status" value="1"/>
</dbReference>
<dbReference type="PANTHER" id="PTHR11264">
    <property type="entry name" value="URACIL-DNA GLYCOSYLASE"/>
    <property type="match status" value="1"/>
</dbReference>
<dbReference type="PANTHER" id="PTHR11264:SF0">
    <property type="entry name" value="URACIL-DNA GLYCOSYLASE"/>
    <property type="match status" value="1"/>
</dbReference>
<dbReference type="Pfam" id="PF03167">
    <property type="entry name" value="UDG"/>
    <property type="match status" value="1"/>
</dbReference>
<dbReference type="SMART" id="SM00986">
    <property type="entry name" value="UDG"/>
    <property type="match status" value="1"/>
</dbReference>
<dbReference type="SMART" id="SM00987">
    <property type="entry name" value="UreE_C"/>
    <property type="match status" value="1"/>
</dbReference>
<dbReference type="SUPFAM" id="SSF52141">
    <property type="entry name" value="Uracil-DNA glycosylase-like"/>
    <property type="match status" value="1"/>
</dbReference>
<dbReference type="PROSITE" id="PS00130">
    <property type="entry name" value="U_DNA_GLYCOSYLASE"/>
    <property type="match status" value="1"/>
</dbReference>
<name>UNG_STRPN</name>
<keyword id="KW-0963">Cytoplasm</keyword>
<keyword id="KW-0227">DNA damage</keyword>
<keyword id="KW-0234">DNA repair</keyword>
<keyword id="KW-0378">Hydrolase</keyword>
<keyword id="KW-1185">Reference proteome</keyword>
<sequence>MEHSSWHALIKAQLPEGYFGKINQFMEQVYSQGIIYPPKEKVFQALLTTLLEEVKVVILGQDPYHGPGQAQGLSFSVPDSIPAPPSLQNILKELSDDIGVKKSHDLTAWAEQGVLLLNACLTVPAGQANGHAGQIWEPFTDAVIQVVNHLDRPVVFVLWGAYARKKKALVTNPHHLIIESAHPSPLSVYRGFWGSKPFSKANAFLKETGQEPIDWLR</sequence>
<proteinExistence type="inferred from homology"/>
<protein>
    <recommendedName>
        <fullName>Uracil-DNA glycosylase</fullName>
        <shortName>UDG</shortName>
        <ecNumber>3.2.2.27</ecNumber>
    </recommendedName>
</protein>
<organism>
    <name type="scientific">Streptococcus pneumoniae serotype 4 (strain ATCC BAA-334 / TIGR4)</name>
    <dbReference type="NCBI Taxonomy" id="170187"/>
    <lineage>
        <taxon>Bacteria</taxon>
        <taxon>Bacillati</taxon>
        <taxon>Bacillota</taxon>
        <taxon>Bacilli</taxon>
        <taxon>Lactobacillales</taxon>
        <taxon>Streptococcaceae</taxon>
        <taxon>Streptococcus</taxon>
    </lineage>
</organism>